<protein>
    <recommendedName>
        <fullName evidence="1">Phospho-N-acetylmuramoyl-pentapeptide-transferase</fullName>
        <ecNumber evidence="1">2.7.8.13</ecNumber>
    </recommendedName>
    <alternativeName>
        <fullName evidence="1">UDP-MurNAc-pentapeptide phosphotransferase</fullName>
    </alternativeName>
</protein>
<feature type="chain" id="PRO_1000002967" description="Phospho-N-acetylmuramoyl-pentapeptide-transferase">
    <location>
        <begin position="1"/>
        <end position="360"/>
    </location>
</feature>
<feature type="transmembrane region" description="Helical" evidence="1">
    <location>
        <begin position="19"/>
        <end position="39"/>
    </location>
</feature>
<feature type="transmembrane region" description="Helical" evidence="1">
    <location>
        <begin position="73"/>
        <end position="93"/>
    </location>
</feature>
<feature type="transmembrane region" description="Helical" evidence="1">
    <location>
        <begin position="95"/>
        <end position="115"/>
    </location>
</feature>
<feature type="transmembrane region" description="Helical" evidence="1">
    <location>
        <begin position="136"/>
        <end position="156"/>
    </location>
</feature>
<feature type="transmembrane region" description="Helical" evidence="1">
    <location>
        <begin position="173"/>
        <end position="193"/>
    </location>
</feature>
<feature type="transmembrane region" description="Helical" evidence="1">
    <location>
        <begin position="199"/>
        <end position="219"/>
    </location>
</feature>
<feature type="transmembrane region" description="Helical" evidence="1">
    <location>
        <begin position="233"/>
        <end position="253"/>
    </location>
</feature>
<feature type="transmembrane region" description="Helical" evidence="1">
    <location>
        <begin position="263"/>
        <end position="283"/>
    </location>
</feature>
<feature type="transmembrane region" description="Helical" evidence="1">
    <location>
        <begin position="288"/>
        <end position="308"/>
    </location>
</feature>
<feature type="transmembrane region" description="Helical" evidence="1">
    <location>
        <begin position="338"/>
        <end position="358"/>
    </location>
</feature>
<dbReference type="EC" id="2.7.8.13" evidence="1"/>
<dbReference type="EMBL" id="CP000513">
    <property type="protein sequence ID" value="ABQ13706.1"/>
    <property type="molecule type" value="Genomic_DNA"/>
</dbReference>
<dbReference type="RefSeq" id="WP_012031297.1">
    <property type="nucleotide sequence ID" value="NC_009446.1"/>
</dbReference>
<dbReference type="SMR" id="A5EY06"/>
<dbReference type="STRING" id="246195.DNO_0984"/>
<dbReference type="KEGG" id="dno:DNO_0984"/>
<dbReference type="eggNOG" id="COG0472">
    <property type="taxonomic scope" value="Bacteria"/>
</dbReference>
<dbReference type="HOGENOM" id="CLU_023982_0_0_6"/>
<dbReference type="OrthoDB" id="9805475at2"/>
<dbReference type="UniPathway" id="UPA00219"/>
<dbReference type="Proteomes" id="UP000000248">
    <property type="component" value="Chromosome"/>
</dbReference>
<dbReference type="GO" id="GO:0005886">
    <property type="term" value="C:plasma membrane"/>
    <property type="evidence" value="ECO:0007669"/>
    <property type="project" value="UniProtKB-SubCell"/>
</dbReference>
<dbReference type="GO" id="GO:0046872">
    <property type="term" value="F:metal ion binding"/>
    <property type="evidence" value="ECO:0007669"/>
    <property type="project" value="UniProtKB-KW"/>
</dbReference>
<dbReference type="GO" id="GO:0008963">
    <property type="term" value="F:phospho-N-acetylmuramoyl-pentapeptide-transferase activity"/>
    <property type="evidence" value="ECO:0007669"/>
    <property type="project" value="UniProtKB-UniRule"/>
</dbReference>
<dbReference type="GO" id="GO:0051992">
    <property type="term" value="F:UDP-N-acetylmuramoyl-L-alanyl-D-glutamyl-meso-2,6-diaminopimelyl-D-alanyl-D-alanine:undecaprenyl-phosphate transferase activity"/>
    <property type="evidence" value="ECO:0007669"/>
    <property type="project" value="RHEA"/>
</dbReference>
<dbReference type="GO" id="GO:0051301">
    <property type="term" value="P:cell division"/>
    <property type="evidence" value="ECO:0007669"/>
    <property type="project" value="UniProtKB-KW"/>
</dbReference>
<dbReference type="GO" id="GO:0071555">
    <property type="term" value="P:cell wall organization"/>
    <property type="evidence" value="ECO:0007669"/>
    <property type="project" value="UniProtKB-KW"/>
</dbReference>
<dbReference type="GO" id="GO:0009252">
    <property type="term" value="P:peptidoglycan biosynthetic process"/>
    <property type="evidence" value="ECO:0007669"/>
    <property type="project" value="UniProtKB-UniRule"/>
</dbReference>
<dbReference type="GO" id="GO:0008360">
    <property type="term" value="P:regulation of cell shape"/>
    <property type="evidence" value="ECO:0007669"/>
    <property type="project" value="UniProtKB-KW"/>
</dbReference>
<dbReference type="CDD" id="cd06852">
    <property type="entry name" value="GT_MraY"/>
    <property type="match status" value="1"/>
</dbReference>
<dbReference type="HAMAP" id="MF_00038">
    <property type="entry name" value="MraY"/>
    <property type="match status" value="1"/>
</dbReference>
<dbReference type="InterPro" id="IPR000715">
    <property type="entry name" value="Glycosyl_transferase_4"/>
</dbReference>
<dbReference type="InterPro" id="IPR003524">
    <property type="entry name" value="PNAcMuramoyl-5peptid_Trfase"/>
</dbReference>
<dbReference type="InterPro" id="IPR018480">
    <property type="entry name" value="PNAcMuramoyl-5peptid_Trfase_CS"/>
</dbReference>
<dbReference type="NCBIfam" id="TIGR00445">
    <property type="entry name" value="mraY"/>
    <property type="match status" value="1"/>
</dbReference>
<dbReference type="PANTHER" id="PTHR22926">
    <property type="entry name" value="PHOSPHO-N-ACETYLMURAMOYL-PENTAPEPTIDE-TRANSFERASE"/>
    <property type="match status" value="1"/>
</dbReference>
<dbReference type="PANTHER" id="PTHR22926:SF5">
    <property type="entry name" value="PHOSPHO-N-ACETYLMURAMOYL-PENTAPEPTIDE-TRANSFERASE HOMOLOG"/>
    <property type="match status" value="1"/>
</dbReference>
<dbReference type="Pfam" id="PF00953">
    <property type="entry name" value="Glycos_transf_4"/>
    <property type="match status" value="1"/>
</dbReference>
<dbReference type="Pfam" id="PF10555">
    <property type="entry name" value="MraY_sig1"/>
    <property type="match status" value="1"/>
</dbReference>
<dbReference type="PROSITE" id="PS01347">
    <property type="entry name" value="MRAY_1"/>
    <property type="match status" value="1"/>
</dbReference>
<dbReference type="PROSITE" id="PS01348">
    <property type="entry name" value="MRAY_2"/>
    <property type="match status" value="1"/>
</dbReference>
<name>MRAY_DICNV</name>
<comment type="function">
    <text evidence="1">Catalyzes the initial step of the lipid cycle reactions in the biosynthesis of the cell wall peptidoglycan: transfers peptidoglycan precursor phospho-MurNAc-pentapeptide from UDP-MurNAc-pentapeptide onto the lipid carrier undecaprenyl phosphate, yielding undecaprenyl-pyrophosphoryl-MurNAc-pentapeptide, known as lipid I.</text>
</comment>
<comment type="catalytic activity">
    <reaction evidence="1">
        <text>UDP-N-acetyl-alpha-D-muramoyl-L-alanyl-gamma-D-glutamyl-meso-2,6-diaminopimeloyl-D-alanyl-D-alanine + di-trans,octa-cis-undecaprenyl phosphate = di-trans,octa-cis-undecaprenyl diphospho-N-acetyl-alpha-D-muramoyl-L-alanyl-D-glutamyl-meso-2,6-diaminopimeloyl-D-alanyl-D-alanine + UMP</text>
        <dbReference type="Rhea" id="RHEA:28386"/>
        <dbReference type="ChEBI" id="CHEBI:57865"/>
        <dbReference type="ChEBI" id="CHEBI:60392"/>
        <dbReference type="ChEBI" id="CHEBI:61386"/>
        <dbReference type="ChEBI" id="CHEBI:61387"/>
        <dbReference type="EC" id="2.7.8.13"/>
    </reaction>
</comment>
<comment type="cofactor">
    <cofactor evidence="1">
        <name>Mg(2+)</name>
        <dbReference type="ChEBI" id="CHEBI:18420"/>
    </cofactor>
</comment>
<comment type="pathway">
    <text evidence="1">Cell wall biogenesis; peptidoglycan biosynthesis.</text>
</comment>
<comment type="subcellular location">
    <subcellularLocation>
        <location evidence="1">Cell inner membrane</location>
        <topology evidence="1">Multi-pass membrane protein</topology>
    </subcellularLocation>
</comment>
<comment type="similarity">
    <text evidence="1">Belongs to the glycosyltransferase 4 family. MraY subfamily.</text>
</comment>
<keyword id="KW-0131">Cell cycle</keyword>
<keyword id="KW-0132">Cell division</keyword>
<keyword id="KW-0997">Cell inner membrane</keyword>
<keyword id="KW-1003">Cell membrane</keyword>
<keyword id="KW-0133">Cell shape</keyword>
<keyword id="KW-0961">Cell wall biogenesis/degradation</keyword>
<keyword id="KW-0460">Magnesium</keyword>
<keyword id="KW-0472">Membrane</keyword>
<keyword id="KW-0479">Metal-binding</keyword>
<keyword id="KW-0573">Peptidoglycan synthesis</keyword>
<keyword id="KW-1185">Reference proteome</keyword>
<keyword id="KW-0808">Transferase</keyword>
<keyword id="KW-0812">Transmembrane</keyword>
<keyword id="KW-1133">Transmembrane helix</keyword>
<reference key="1">
    <citation type="journal article" date="2007" name="Nat. Biotechnol.">
        <title>Genome sequence and identification of candidate vaccine antigens from the animal pathogen Dichelobacter nodosus.</title>
        <authorList>
            <person name="Myers G.S.A."/>
            <person name="Parker D."/>
            <person name="Al-Hasani K."/>
            <person name="Kennan R.M."/>
            <person name="Seemann T."/>
            <person name="Ren Q."/>
            <person name="Badger J.H."/>
            <person name="Selengut J.D."/>
            <person name="Deboy R.T."/>
            <person name="Tettelin H."/>
            <person name="Boyce J.D."/>
            <person name="McCarl V.P."/>
            <person name="Han X."/>
            <person name="Nelson W.C."/>
            <person name="Madupu R."/>
            <person name="Mohamoud Y."/>
            <person name="Holley T."/>
            <person name="Fedorova N."/>
            <person name="Khouri H."/>
            <person name="Bottomley S.P."/>
            <person name="Whittington R.J."/>
            <person name="Adler B."/>
            <person name="Songer J.G."/>
            <person name="Rood J.I."/>
            <person name="Paulsen I.T."/>
        </authorList>
    </citation>
    <scope>NUCLEOTIDE SEQUENCE [LARGE SCALE GENOMIC DNA]</scope>
    <source>
        <strain>VCS1703A</strain>
    </source>
</reference>
<gene>
    <name evidence="1" type="primary">mraY</name>
    <name type="ordered locus">DNO_0984</name>
</gene>
<sequence length="360" mass="38994">MLYALATGLSAIFTPLNALTYLTSRIILGALTALLLSIFCGGKMIRYLQKMQMGQFVRDDGPKTHLKKAGTPTMGGALIIFSITVSMLCWADLRSVYTWLALFVLLGFGAVGWTDDYLKLVKKNTKGLAAKQKYAYLSLVALLTALWLYFLADTPIETTLIMPFFKHFEWQMGILFIPFVYLVLTGASNAVNLTDGLDGLAIMPVVLVSGGLCIFAYLSGSANFALYLHIPAIAGAGEMAIFCAAIAGAGLGFLWYNAHPALVFMGDVGALSLGAALATVAVVVRQELAFAVMGGVFVAEALSVMIQVGSYKCRGKRVFRMAPLHHHFELGGWPESRVTIRFWIITVVLVLVGLSTLKLR</sequence>
<proteinExistence type="inferred from homology"/>
<organism>
    <name type="scientific">Dichelobacter nodosus (strain VCS1703A)</name>
    <dbReference type="NCBI Taxonomy" id="246195"/>
    <lineage>
        <taxon>Bacteria</taxon>
        <taxon>Pseudomonadati</taxon>
        <taxon>Pseudomonadota</taxon>
        <taxon>Gammaproteobacteria</taxon>
        <taxon>Cardiobacteriales</taxon>
        <taxon>Cardiobacteriaceae</taxon>
        <taxon>Dichelobacter</taxon>
    </lineage>
</organism>
<evidence type="ECO:0000255" key="1">
    <source>
        <dbReference type="HAMAP-Rule" id="MF_00038"/>
    </source>
</evidence>
<accession>A5EY06</accession>